<name>VAC8_ASPFU</name>
<feature type="chain" id="PRO_0000256206" description="Vacuolar protein 8">
    <location>
        <begin position="1"/>
        <end position="578"/>
    </location>
</feature>
<feature type="repeat" description="ARM 1">
    <location>
        <begin position="58"/>
        <end position="95"/>
    </location>
</feature>
<feature type="repeat" description="ARM 2">
    <location>
        <begin position="96"/>
        <end position="135"/>
    </location>
</feature>
<feature type="repeat" description="ARM 3">
    <location>
        <begin position="137"/>
        <end position="176"/>
    </location>
</feature>
<feature type="repeat" description="ARM 4">
    <location>
        <begin position="178"/>
        <end position="217"/>
    </location>
</feature>
<feature type="repeat" description="ARM 5">
    <location>
        <begin position="219"/>
        <end position="258"/>
    </location>
</feature>
<feature type="repeat" description="ARM 6">
    <location>
        <begin position="262"/>
        <end position="301"/>
    </location>
</feature>
<feature type="repeat" description="ARM 7">
    <location>
        <begin position="303"/>
        <end position="342"/>
    </location>
</feature>
<feature type="repeat" description="ARM 8">
    <location>
        <begin position="344"/>
        <end position="384"/>
    </location>
</feature>
<feature type="repeat" description="ARM 9">
    <location>
        <begin position="428"/>
        <end position="467"/>
    </location>
</feature>
<sequence>MTAIANACLSCLSAVDRWCHITACLGPIGGRSRDGIYETTLADNEREAVSDLLGYLENRAETDFFSGEPLRALSTLVYSDNVDLQRSASLTFAEITERDVREVDRDTLEPILFLLQSSDIEVQRAASAALGNLAVNAENKVLIVALGGLTPLIRQMMSPNVEVQCNAVGCITNLATHEDNKAKIARSGALGPLIRLAKSKDMRVQRNATGALLNMTHSDDNRQQLVNAGAIPVLVQLLSSPDVDVQYYCTTALSNIAVDASNRKRLAQTESRLVQSLVHLMDSSTPKVQCQAALALRNLASDEKYQLEIVRAKGLPPLLRLLQSSYLPLILSAVACIRNISIHPLNESPIIDAGFLKPLVDLLGSTDNEEIQCHAISTLRNLAASSDRNKELVLQAGAVQKCKDLVLRVPLSVQSEMTAAIAVLALSDELKPHLLNLGVFDVLIPLTNSESIEVQGNSAAALGNLSSKVGDYSIFVRDWADPNGGIHGYLKRFLASGDPTFQHIAIWTLLQLLESEDKRLIGYISKSDDIVQMVKTISDKNIESDEEDGEDGEAEVIALARRCLGLLGNGPKQTLVEG</sequence>
<organism>
    <name type="scientific">Aspergillus fumigatus (strain ATCC MYA-4609 / CBS 101355 / FGSC A1100 / Af293)</name>
    <name type="common">Neosartorya fumigata</name>
    <dbReference type="NCBI Taxonomy" id="330879"/>
    <lineage>
        <taxon>Eukaryota</taxon>
        <taxon>Fungi</taxon>
        <taxon>Dikarya</taxon>
        <taxon>Ascomycota</taxon>
        <taxon>Pezizomycotina</taxon>
        <taxon>Eurotiomycetes</taxon>
        <taxon>Eurotiomycetidae</taxon>
        <taxon>Eurotiales</taxon>
        <taxon>Aspergillaceae</taxon>
        <taxon>Aspergillus</taxon>
        <taxon>Aspergillus subgen. Fumigati</taxon>
    </lineage>
</organism>
<gene>
    <name type="primary">vac8</name>
    <name type="ORF">AFUA_5G13540</name>
</gene>
<reference key="1">
    <citation type="journal article" date="2005" name="Nature">
        <title>Genomic sequence of the pathogenic and allergenic filamentous fungus Aspergillus fumigatus.</title>
        <authorList>
            <person name="Nierman W.C."/>
            <person name="Pain A."/>
            <person name="Anderson M.J."/>
            <person name="Wortman J.R."/>
            <person name="Kim H.S."/>
            <person name="Arroyo J."/>
            <person name="Berriman M."/>
            <person name="Abe K."/>
            <person name="Archer D.B."/>
            <person name="Bermejo C."/>
            <person name="Bennett J.W."/>
            <person name="Bowyer P."/>
            <person name="Chen D."/>
            <person name="Collins M."/>
            <person name="Coulsen R."/>
            <person name="Davies R."/>
            <person name="Dyer P.S."/>
            <person name="Farman M.L."/>
            <person name="Fedorova N."/>
            <person name="Fedorova N.D."/>
            <person name="Feldblyum T.V."/>
            <person name="Fischer R."/>
            <person name="Fosker N."/>
            <person name="Fraser A."/>
            <person name="Garcia J.L."/>
            <person name="Garcia M.J."/>
            <person name="Goble A."/>
            <person name="Goldman G.H."/>
            <person name="Gomi K."/>
            <person name="Griffith-Jones S."/>
            <person name="Gwilliam R."/>
            <person name="Haas B.J."/>
            <person name="Haas H."/>
            <person name="Harris D.E."/>
            <person name="Horiuchi H."/>
            <person name="Huang J."/>
            <person name="Humphray S."/>
            <person name="Jimenez J."/>
            <person name="Keller N."/>
            <person name="Khouri H."/>
            <person name="Kitamoto K."/>
            <person name="Kobayashi T."/>
            <person name="Konzack S."/>
            <person name="Kulkarni R."/>
            <person name="Kumagai T."/>
            <person name="Lafton A."/>
            <person name="Latge J.-P."/>
            <person name="Li W."/>
            <person name="Lord A."/>
            <person name="Lu C."/>
            <person name="Majoros W.H."/>
            <person name="May G.S."/>
            <person name="Miller B.L."/>
            <person name="Mohamoud Y."/>
            <person name="Molina M."/>
            <person name="Monod M."/>
            <person name="Mouyna I."/>
            <person name="Mulligan S."/>
            <person name="Murphy L.D."/>
            <person name="O'Neil S."/>
            <person name="Paulsen I."/>
            <person name="Penalva M.A."/>
            <person name="Pertea M."/>
            <person name="Price C."/>
            <person name="Pritchard B.L."/>
            <person name="Quail M.A."/>
            <person name="Rabbinowitsch E."/>
            <person name="Rawlins N."/>
            <person name="Rajandream M.A."/>
            <person name="Reichard U."/>
            <person name="Renauld H."/>
            <person name="Robson G.D."/>
            <person name="Rodriguez de Cordoba S."/>
            <person name="Rodriguez-Pena J.M."/>
            <person name="Ronning C.M."/>
            <person name="Rutter S."/>
            <person name="Salzberg S.L."/>
            <person name="Sanchez M."/>
            <person name="Sanchez-Ferrero J.C."/>
            <person name="Saunders D."/>
            <person name="Seeger K."/>
            <person name="Squares R."/>
            <person name="Squares S."/>
            <person name="Takeuchi M."/>
            <person name="Tekaia F."/>
            <person name="Turner G."/>
            <person name="Vazquez de Aldana C.R."/>
            <person name="Weidman J."/>
            <person name="White O."/>
            <person name="Woodward J.R."/>
            <person name="Yu J.-H."/>
            <person name="Fraser C.M."/>
            <person name="Galagan J.E."/>
            <person name="Asai K."/>
            <person name="Machida M."/>
            <person name="Hall N."/>
            <person name="Barrell B.G."/>
            <person name="Denning D.W."/>
        </authorList>
    </citation>
    <scope>NUCLEOTIDE SEQUENCE [LARGE SCALE GENOMIC DNA]</scope>
    <source>
        <strain>ATCC MYA-4609 / CBS 101355 / FGSC A1100 / Af293</strain>
    </source>
</reference>
<protein>
    <recommendedName>
        <fullName>Vacuolar protein 8</fullName>
    </recommendedName>
</protein>
<proteinExistence type="inferred from homology"/>
<dbReference type="EMBL" id="AAHF01000003">
    <property type="protein sequence ID" value="EAL91262.1"/>
    <property type="molecule type" value="Genomic_DNA"/>
</dbReference>
<dbReference type="RefSeq" id="XP_753300.1">
    <property type="nucleotide sequence ID" value="XM_748207.1"/>
</dbReference>
<dbReference type="SMR" id="Q4WVW4"/>
<dbReference type="FunCoup" id="Q4WVW4">
    <property type="interactions" value="128"/>
</dbReference>
<dbReference type="STRING" id="330879.Q4WVW4"/>
<dbReference type="SwissPalm" id="Q4WVW4"/>
<dbReference type="EnsemblFungi" id="EAL91262">
    <property type="protein sequence ID" value="EAL91262"/>
    <property type="gene ID" value="AFUA_5G13540"/>
</dbReference>
<dbReference type="GeneID" id="3511463"/>
<dbReference type="KEGG" id="afm:AFUA_5G13540"/>
<dbReference type="VEuPathDB" id="FungiDB:Afu5g13540"/>
<dbReference type="eggNOG" id="KOG4224">
    <property type="taxonomic scope" value="Eukaryota"/>
</dbReference>
<dbReference type="HOGENOM" id="CLU_021483_0_0_1"/>
<dbReference type="InParanoid" id="Q4WVW4"/>
<dbReference type="OMA" id="VWDKPDG"/>
<dbReference type="OrthoDB" id="7537227at2759"/>
<dbReference type="Proteomes" id="UP000002530">
    <property type="component" value="Chromosome 5"/>
</dbReference>
<dbReference type="GO" id="GO:0000329">
    <property type="term" value="C:fungal-type vacuole membrane"/>
    <property type="evidence" value="ECO:0000318"/>
    <property type="project" value="GO_Central"/>
</dbReference>
<dbReference type="GO" id="GO:0045121">
    <property type="term" value="C:membrane raft"/>
    <property type="evidence" value="ECO:0007669"/>
    <property type="project" value="EnsemblFungi"/>
</dbReference>
<dbReference type="GO" id="GO:0071563">
    <property type="term" value="C:Myo2p-Vac17p-Vac8p transport complex"/>
    <property type="evidence" value="ECO:0007669"/>
    <property type="project" value="EnsemblFungi"/>
</dbReference>
<dbReference type="GO" id="GO:0031965">
    <property type="term" value="C:nuclear membrane"/>
    <property type="evidence" value="ECO:0007669"/>
    <property type="project" value="EnsemblFungi"/>
</dbReference>
<dbReference type="GO" id="GO:0071561">
    <property type="term" value="C:nucleus-vacuole junction"/>
    <property type="evidence" value="ECO:0007669"/>
    <property type="project" value="EnsemblFungi"/>
</dbReference>
<dbReference type="GO" id="GO:0000407">
    <property type="term" value="C:phagophore assembly site"/>
    <property type="evidence" value="ECO:0007669"/>
    <property type="project" value="EnsemblFungi"/>
</dbReference>
<dbReference type="GO" id="GO:0042802">
    <property type="term" value="F:identical protein binding"/>
    <property type="evidence" value="ECO:0007669"/>
    <property type="project" value="EnsemblFungi"/>
</dbReference>
<dbReference type="GO" id="GO:0043495">
    <property type="term" value="F:protein-membrane adaptor activity"/>
    <property type="evidence" value="ECO:0000318"/>
    <property type="project" value="GO_Central"/>
</dbReference>
<dbReference type="GO" id="GO:0000045">
    <property type="term" value="P:autophagosome assembly"/>
    <property type="evidence" value="ECO:0000318"/>
    <property type="project" value="GO_Central"/>
</dbReference>
<dbReference type="GO" id="GO:0051656">
    <property type="term" value="P:establishment of organelle localization"/>
    <property type="evidence" value="ECO:0007669"/>
    <property type="project" value="EnsemblFungi"/>
</dbReference>
<dbReference type="GO" id="GO:0071562">
    <property type="term" value="P:nucleus-vacuole junction assembly"/>
    <property type="evidence" value="ECO:0000318"/>
    <property type="project" value="GO_Central"/>
</dbReference>
<dbReference type="GO" id="GO:0000425">
    <property type="term" value="P:pexophagy"/>
    <property type="evidence" value="ECO:0007669"/>
    <property type="project" value="EnsemblFungi"/>
</dbReference>
<dbReference type="GO" id="GO:0034727">
    <property type="term" value="P:piecemeal microautophagy of the nucleus"/>
    <property type="evidence" value="ECO:0007669"/>
    <property type="project" value="EnsemblFungi"/>
</dbReference>
<dbReference type="GO" id="GO:1903044">
    <property type="term" value="P:protein localization to membrane raft"/>
    <property type="evidence" value="ECO:0007669"/>
    <property type="project" value="EnsemblFungi"/>
</dbReference>
<dbReference type="GO" id="GO:0034497">
    <property type="term" value="P:protein localization to phagophore assembly site"/>
    <property type="evidence" value="ECO:0007669"/>
    <property type="project" value="EnsemblFungi"/>
</dbReference>
<dbReference type="GO" id="GO:0031503">
    <property type="term" value="P:protein-containing complex localization"/>
    <property type="evidence" value="ECO:0007669"/>
    <property type="project" value="EnsemblFungi"/>
</dbReference>
<dbReference type="GO" id="GO:0034517">
    <property type="term" value="P:ribophagy"/>
    <property type="evidence" value="ECO:0007669"/>
    <property type="project" value="EnsemblFungi"/>
</dbReference>
<dbReference type="GO" id="GO:0042144">
    <property type="term" value="P:vacuole fusion, non-autophagic"/>
    <property type="evidence" value="ECO:0007669"/>
    <property type="project" value="EnsemblFungi"/>
</dbReference>
<dbReference type="GO" id="GO:0000011">
    <property type="term" value="P:vacuole inheritance"/>
    <property type="evidence" value="ECO:0007669"/>
    <property type="project" value="EnsemblFungi"/>
</dbReference>
<dbReference type="FunFam" id="1.25.10.10:FF:000243">
    <property type="entry name" value="Putative Vacuolar protein 8"/>
    <property type="match status" value="1"/>
</dbReference>
<dbReference type="FunFam" id="1.25.10.10:FF:000095">
    <property type="entry name" value="Vacuolar protein 8"/>
    <property type="match status" value="1"/>
</dbReference>
<dbReference type="Gene3D" id="1.25.10.10">
    <property type="entry name" value="Leucine-rich Repeat Variant"/>
    <property type="match status" value="3"/>
</dbReference>
<dbReference type="InterPro" id="IPR011989">
    <property type="entry name" value="ARM-like"/>
</dbReference>
<dbReference type="InterPro" id="IPR016024">
    <property type="entry name" value="ARM-type_fold"/>
</dbReference>
<dbReference type="InterPro" id="IPR000225">
    <property type="entry name" value="Armadillo"/>
</dbReference>
<dbReference type="InterPro" id="IPR045156">
    <property type="entry name" value="Vac8"/>
</dbReference>
<dbReference type="PANTHER" id="PTHR47249">
    <property type="entry name" value="VACUOLAR PROTEIN 8"/>
    <property type="match status" value="1"/>
</dbReference>
<dbReference type="PANTHER" id="PTHR47249:SF1">
    <property type="entry name" value="VACUOLAR PROTEIN 8"/>
    <property type="match status" value="1"/>
</dbReference>
<dbReference type="Pfam" id="PF00514">
    <property type="entry name" value="Arm"/>
    <property type="match status" value="8"/>
</dbReference>
<dbReference type="SMART" id="SM00185">
    <property type="entry name" value="ARM"/>
    <property type="match status" value="9"/>
</dbReference>
<dbReference type="SUPFAM" id="SSF48371">
    <property type="entry name" value="ARM repeat"/>
    <property type="match status" value="1"/>
</dbReference>
<dbReference type="PROSITE" id="PS50176">
    <property type="entry name" value="ARM_REPEAT"/>
    <property type="match status" value="7"/>
</dbReference>
<comment type="function">
    <text evidence="1">Functions in both vacuole inheritance and protein targeting from the cytoplasm to vacuole.</text>
</comment>
<comment type="subcellular location">
    <subcellularLocation>
        <location evidence="1">Vacuole membrane</location>
        <topology evidence="1">Lipid-anchor</topology>
    </subcellularLocation>
</comment>
<comment type="similarity">
    <text evidence="2">Belongs to the beta-catenin family.</text>
</comment>
<accession>Q4WVW4</accession>
<keyword id="KW-0449">Lipoprotein</keyword>
<keyword id="KW-0472">Membrane</keyword>
<keyword id="KW-1185">Reference proteome</keyword>
<keyword id="KW-0677">Repeat</keyword>
<keyword id="KW-0926">Vacuole</keyword>
<evidence type="ECO:0000250" key="1"/>
<evidence type="ECO:0000305" key="2"/>